<gene>
    <name evidence="1" type="primary">rplK</name>
    <name type="ordered locus">AHA_4032</name>
</gene>
<name>RL11_AERHH</name>
<protein>
    <recommendedName>
        <fullName evidence="1">Large ribosomal subunit protein uL11</fullName>
    </recommendedName>
    <alternativeName>
        <fullName evidence="2">50S ribosomal protein L11</fullName>
    </alternativeName>
</protein>
<keyword id="KW-0488">Methylation</keyword>
<keyword id="KW-1185">Reference proteome</keyword>
<keyword id="KW-0687">Ribonucleoprotein</keyword>
<keyword id="KW-0689">Ribosomal protein</keyword>
<keyword id="KW-0694">RNA-binding</keyword>
<keyword id="KW-0699">rRNA-binding</keyword>
<organism>
    <name type="scientific">Aeromonas hydrophila subsp. hydrophila (strain ATCC 7966 / DSM 30187 / BCRC 13018 / CCUG 14551 / JCM 1027 / KCTC 2358 / NCIMB 9240 / NCTC 8049)</name>
    <dbReference type="NCBI Taxonomy" id="380703"/>
    <lineage>
        <taxon>Bacteria</taxon>
        <taxon>Pseudomonadati</taxon>
        <taxon>Pseudomonadota</taxon>
        <taxon>Gammaproteobacteria</taxon>
        <taxon>Aeromonadales</taxon>
        <taxon>Aeromonadaceae</taxon>
        <taxon>Aeromonas</taxon>
    </lineage>
</organism>
<proteinExistence type="inferred from homology"/>
<accession>A0KQA9</accession>
<feature type="chain" id="PRO_1000046132" description="Large ribosomal subunit protein uL11">
    <location>
        <begin position="1"/>
        <end position="142"/>
    </location>
</feature>
<reference key="1">
    <citation type="journal article" date="2006" name="J. Bacteriol.">
        <title>Genome sequence of Aeromonas hydrophila ATCC 7966T: jack of all trades.</title>
        <authorList>
            <person name="Seshadri R."/>
            <person name="Joseph S.W."/>
            <person name="Chopra A.K."/>
            <person name="Sha J."/>
            <person name="Shaw J."/>
            <person name="Graf J."/>
            <person name="Haft D.H."/>
            <person name="Wu M."/>
            <person name="Ren Q."/>
            <person name="Rosovitz M.J."/>
            <person name="Madupu R."/>
            <person name="Tallon L."/>
            <person name="Kim M."/>
            <person name="Jin S."/>
            <person name="Vuong H."/>
            <person name="Stine O.C."/>
            <person name="Ali A."/>
            <person name="Horneman A.J."/>
            <person name="Heidelberg J.F."/>
        </authorList>
    </citation>
    <scope>NUCLEOTIDE SEQUENCE [LARGE SCALE GENOMIC DNA]</scope>
    <source>
        <strain>ATCC 7966 / DSM 30187 / BCRC 13018 / CCUG 14551 / JCM 1027 / KCTC 2358 / NCIMB 9240 / NCTC 8049</strain>
    </source>
</reference>
<dbReference type="EMBL" id="CP000462">
    <property type="protein sequence ID" value="ABK36246.1"/>
    <property type="molecule type" value="Genomic_DNA"/>
</dbReference>
<dbReference type="RefSeq" id="WP_005318556.1">
    <property type="nucleotide sequence ID" value="NC_008570.1"/>
</dbReference>
<dbReference type="RefSeq" id="YP_858460.1">
    <property type="nucleotide sequence ID" value="NC_008570.1"/>
</dbReference>
<dbReference type="SMR" id="A0KQA9"/>
<dbReference type="STRING" id="380703.AHA_4032"/>
<dbReference type="EnsemblBacteria" id="ABK36246">
    <property type="protein sequence ID" value="ABK36246"/>
    <property type="gene ID" value="AHA_4032"/>
</dbReference>
<dbReference type="GeneID" id="92725360"/>
<dbReference type="KEGG" id="aha:AHA_4032"/>
<dbReference type="PATRIC" id="fig|380703.7.peg.3992"/>
<dbReference type="eggNOG" id="COG0080">
    <property type="taxonomic scope" value="Bacteria"/>
</dbReference>
<dbReference type="HOGENOM" id="CLU_074237_2_0_6"/>
<dbReference type="OrthoDB" id="9802408at2"/>
<dbReference type="PRO" id="PR:A0KQA9"/>
<dbReference type="Proteomes" id="UP000000756">
    <property type="component" value="Chromosome"/>
</dbReference>
<dbReference type="GO" id="GO:0022625">
    <property type="term" value="C:cytosolic large ribosomal subunit"/>
    <property type="evidence" value="ECO:0007669"/>
    <property type="project" value="TreeGrafter"/>
</dbReference>
<dbReference type="GO" id="GO:0070180">
    <property type="term" value="F:large ribosomal subunit rRNA binding"/>
    <property type="evidence" value="ECO:0007669"/>
    <property type="project" value="UniProtKB-UniRule"/>
</dbReference>
<dbReference type="GO" id="GO:0003735">
    <property type="term" value="F:structural constituent of ribosome"/>
    <property type="evidence" value="ECO:0007669"/>
    <property type="project" value="InterPro"/>
</dbReference>
<dbReference type="GO" id="GO:0006412">
    <property type="term" value="P:translation"/>
    <property type="evidence" value="ECO:0007669"/>
    <property type="project" value="UniProtKB-UniRule"/>
</dbReference>
<dbReference type="CDD" id="cd00349">
    <property type="entry name" value="Ribosomal_L11"/>
    <property type="match status" value="1"/>
</dbReference>
<dbReference type="FunFam" id="1.10.10.250:FF:000001">
    <property type="entry name" value="50S ribosomal protein L11"/>
    <property type="match status" value="1"/>
</dbReference>
<dbReference type="FunFam" id="3.30.1550.10:FF:000001">
    <property type="entry name" value="50S ribosomal protein L11"/>
    <property type="match status" value="1"/>
</dbReference>
<dbReference type="Gene3D" id="1.10.10.250">
    <property type="entry name" value="Ribosomal protein L11, C-terminal domain"/>
    <property type="match status" value="1"/>
</dbReference>
<dbReference type="Gene3D" id="3.30.1550.10">
    <property type="entry name" value="Ribosomal protein L11/L12, N-terminal domain"/>
    <property type="match status" value="1"/>
</dbReference>
<dbReference type="HAMAP" id="MF_00736">
    <property type="entry name" value="Ribosomal_uL11"/>
    <property type="match status" value="1"/>
</dbReference>
<dbReference type="InterPro" id="IPR000911">
    <property type="entry name" value="Ribosomal_uL11"/>
</dbReference>
<dbReference type="InterPro" id="IPR006519">
    <property type="entry name" value="Ribosomal_uL11_bac-typ"/>
</dbReference>
<dbReference type="InterPro" id="IPR020783">
    <property type="entry name" value="Ribosomal_uL11_C"/>
</dbReference>
<dbReference type="InterPro" id="IPR036769">
    <property type="entry name" value="Ribosomal_uL11_C_sf"/>
</dbReference>
<dbReference type="InterPro" id="IPR020785">
    <property type="entry name" value="Ribosomal_uL11_CS"/>
</dbReference>
<dbReference type="InterPro" id="IPR020784">
    <property type="entry name" value="Ribosomal_uL11_N"/>
</dbReference>
<dbReference type="InterPro" id="IPR036796">
    <property type="entry name" value="Ribosomal_uL11_N_sf"/>
</dbReference>
<dbReference type="NCBIfam" id="TIGR01632">
    <property type="entry name" value="L11_bact"/>
    <property type="match status" value="1"/>
</dbReference>
<dbReference type="PANTHER" id="PTHR11661">
    <property type="entry name" value="60S RIBOSOMAL PROTEIN L12"/>
    <property type="match status" value="1"/>
</dbReference>
<dbReference type="PANTHER" id="PTHR11661:SF1">
    <property type="entry name" value="LARGE RIBOSOMAL SUBUNIT PROTEIN UL11M"/>
    <property type="match status" value="1"/>
</dbReference>
<dbReference type="Pfam" id="PF00298">
    <property type="entry name" value="Ribosomal_L11"/>
    <property type="match status" value="1"/>
</dbReference>
<dbReference type="Pfam" id="PF03946">
    <property type="entry name" value="Ribosomal_L11_N"/>
    <property type="match status" value="1"/>
</dbReference>
<dbReference type="SMART" id="SM00649">
    <property type="entry name" value="RL11"/>
    <property type="match status" value="1"/>
</dbReference>
<dbReference type="SUPFAM" id="SSF54747">
    <property type="entry name" value="Ribosomal L11/L12e N-terminal domain"/>
    <property type="match status" value="1"/>
</dbReference>
<dbReference type="SUPFAM" id="SSF46906">
    <property type="entry name" value="Ribosomal protein L11, C-terminal domain"/>
    <property type="match status" value="1"/>
</dbReference>
<dbReference type="PROSITE" id="PS00359">
    <property type="entry name" value="RIBOSOMAL_L11"/>
    <property type="match status" value="1"/>
</dbReference>
<comment type="function">
    <text evidence="1">Forms part of the ribosomal stalk which helps the ribosome interact with GTP-bound translation factors.</text>
</comment>
<comment type="subunit">
    <text evidence="1">Part of the ribosomal stalk of the 50S ribosomal subunit. Interacts with L10 and the large rRNA to form the base of the stalk. L10 forms an elongated spine to which L12 dimers bind in a sequential fashion forming a multimeric L10(L12)X complex.</text>
</comment>
<comment type="PTM">
    <text evidence="1">One or more lysine residues are methylated.</text>
</comment>
<comment type="similarity">
    <text evidence="1">Belongs to the universal ribosomal protein uL11 family.</text>
</comment>
<evidence type="ECO:0000255" key="1">
    <source>
        <dbReference type="HAMAP-Rule" id="MF_00736"/>
    </source>
</evidence>
<evidence type="ECO:0000305" key="2"/>
<sequence>MAKKVTAYIKLQVKAGSANPSPPVGPALGQHGVNIMEFCKAFNARTEKLEKGSPTPVVITVYSDRSFTFETKTPPAAFLLKKAAGIQSGSAKPNKDKVGKVTVAQLQEIAKTKEPDMTGADLDAKVRCIAGSARSMGLVVED</sequence>